<proteinExistence type="inferred from homology"/>
<name>KITH_MYCGE</name>
<comment type="catalytic activity">
    <reaction evidence="1">
        <text>thymidine + ATP = dTMP + ADP + H(+)</text>
        <dbReference type="Rhea" id="RHEA:19129"/>
        <dbReference type="ChEBI" id="CHEBI:15378"/>
        <dbReference type="ChEBI" id="CHEBI:17748"/>
        <dbReference type="ChEBI" id="CHEBI:30616"/>
        <dbReference type="ChEBI" id="CHEBI:63528"/>
        <dbReference type="ChEBI" id="CHEBI:456216"/>
        <dbReference type="EC" id="2.7.1.21"/>
    </reaction>
</comment>
<comment type="subunit">
    <text evidence="1">Homotetramer.</text>
</comment>
<comment type="subcellular location">
    <subcellularLocation>
        <location evidence="1">Cytoplasm</location>
    </subcellularLocation>
</comment>
<comment type="similarity">
    <text evidence="1">Belongs to the thymidine kinase family.</text>
</comment>
<evidence type="ECO:0000255" key="1">
    <source>
        <dbReference type="HAMAP-Rule" id="MF_00124"/>
    </source>
</evidence>
<protein>
    <recommendedName>
        <fullName evidence="1">Thymidine kinase</fullName>
        <ecNumber evidence="1">2.7.1.21</ecNumber>
    </recommendedName>
</protein>
<feature type="chain" id="PRO_0000174994" description="Thymidine kinase">
    <location>
        <begin position="1"/>
        <end position="213"/>
    </location>
</feature>
<feature type="active site" description="Proton acceptor" evidence="1">
    <location>
        <position position="94"/>
    </location>
</feature>
<feature type="binding site" evidence="1">
    <location>
        <begin position="20"/>
        <end position="27"/>
    </location>
    <ligand>
        <name>ATP</name>
        <dbReference type="ChEBI" id="CHEBI:30616"/>
    </ligand>
</feature>
<feature type="binding site" evidence="1">
    <location>
        <begin position="93"/>
        <end position="96"/>
    </location>
    <ligand>
        <name>ATP</name>
        <dbReference type="ChEBI" id="CHEBI:30616"/>
    </ligand>
</feature>
<feature type="binding site" evidence="1">
    <location>
        <position position="150"/>
    </location>
    <ligand>
        <name>Zn(2+)</name>
        <dbReference type="ChEBI" id="CHEBI:29105"/>
    </ligand>
</feature>
<feature type="binding site" evidence="1">
    <location>
        <position position="153"/>
    </location>
    <ligand>
        <name>Zn(2+)</name>
        <dbReference type="ChEBI" id="CHEBI:29105"/>
    </ligand>
</feature>
<feature type="binding site" evidence="1">
    <location>
        <position position="185"/>
    </location>
    <ligand>
        <name>Zn(2+)</name>
        <dbReference type="ChEBI" id="CHEBI:29105"/>
    </ligand>
</feature>
<feature type="binding site" evidence="1">
    <location>
        <position position="188"/>
    </location>
    <ligand>
        <name>Zn(2+)</name>
        <dbReference type="ChEBI" id="CHEBI:29105"/>
    </ligand>
</feature>
<accession>P47280</accession>
<organism>
    <name type="scientific">Mycoplasma genitalium (strain ATCC 33530 / DSM 19775 / NCTC 10195 / G37)</name>
    <name type="common">Mycoplasmoides genitalium</name>
    <dbReference type="NCBI Taxonomy" id="243273"/>
    <lineage>
        <taxon>Bacteria</taxon>
        <taxon>Bacillati</taxon>
        <taxon>Mycoplasmatota</taxon>
        <taxon>Mycoplasmoidales</taxon>
        <taxon>Mycoplasmoidaceae</taxon>
        <taxon>Mycoplasmoides</taxon>
    </lineage>
</organism>
<sequence length="213" mass="24101">MGKYQPSFQTKKGWTEVICGPMFSGKTEKLLHKIKRWKIAKISVVIFKPIIDTRQTNIVKSRNGEYDQAITINSPFEIYDHLVDKNYQIVAIDEAQFFSNEIIEVVTTLNEIGTNVIISGLDTDFRAEPFGCIPQLLAIADVVNKLDAICNVCGSLAQRTQRLVNKNTNDNLVLIGDAEAYEARCKLHHSFLTKKHVTVKTKNFKEQVQGKTQ</sequence>
<gene>
    <name evidence="1" type="primary">tdk</name>
    <name type="ordered locus">MG034</name>
</gene>
<keyword id="KW-0067">ATP-binding</keyword>
<keyword id="KW-0963">Cytoplasm</keyword>
<keyword id="KW-0237">DNA synthesis</keyword>
<keyword id="KW-0418">Kinase</keyword>
<keyword id="KW-0479">Metal-binding</keyword>
<keyword id="KW-0547">Nucleotide-binding</keyword>
<keyword id="KW-1185">Reference proteome</keyword>
<keyword id="KW-0808">Transferase</keyword>
<keyword id="KW-0862">Zinc</keyword>
<dbReference type="EC" id="2.7.1.21" evidence="1"/>
<dbReference type="EMBL" id="L43967">
    <property type="protein sequence ID" value="AAC71250.1"/>
    <property type="molecule type" value="Genomic_DNA"/>
</dbReference>
<dbReference type="PIR" id="G64203">
    <property type="entry name" value="G64203"/>
</dbReference>
<dbReference type="RefSeq" id="WP_009885698.1">
    <property type="nucleotide sequence ID" value="NC_000908.2"/>
</dbReference>
<dbReference type="SMR" id="P47280"/>
<dbReference type="FunCoup" id="P47280">
    <property type="interactions" value="104"/>
</dbReference>
<dbReference type="STRING" id="243273.MG_034"/>
<dbReference type="GeneID" id="88282149"/>
<dbReference type="KEGG" id="mge:MG_034"/>
<dbReference type="eggNOG" id="COG1435">
    <property type="taxonomic scope" value="Bacteria"/>
</dbReference>
<dbReference type="HOGENOM" id="CLU_064400_3_0_14"/>
<dbReference type="InParanoid" id="P47280"/>
<dbReference type="OrthoDB" id="9781579at2"/>
<dbReference type="BioCyc" id="MGEN243273:G1GJ2-34-MONOMER"/>
<dbReference type="Proteomes" id="UP000000807">
    <property type="component" value="Chromosome"/>
</dbReference>
<dbReference type="GO" id="GO:0005829">
    <property type="term" value="C:cytosol"/>
    <property type="evidence" value="ECO:0000318"/>
    <property type="project" value="GO_Central"/>
</dbReference>
<dbReference type="GO" id="GO:0005524">
    <property type="term" value="F:ATP binding"/>
    <property type="evidence" value="ECO:0007669"/>
    <property type="project" value="UniProtKB-UniRule"/>
</dbReference>
<dbReference type="GO" id="GO:0004797">
    <property type="term" value="F:thymidine kinase activity"/>
    <property type="evidence" value="ECO:0000318"/>
    <property type="project" value="GO_Central"/>
</dbReference>
<dbReference type="GO" id="GO:0008270">
    <property type="term" value="F:zinc ion binding"/>
    <property type="evidence" value="ECO:0007669"/>
    <property type="project" value="UniProtKB-UniRule"/>
</dbReference>
<dbReference type="GO" id="GO:0071897">
    <property type="term" value="P:DNA biosynthetic process"/>
    <property type="evidence" value="ECO:0007669"/>
    <property type="project" value="UniProtKB-KW"/>
</dbReference>
<dbReference type="GO" id="GO:0046104">
    <property type="term" value="P:thymidine metabolic process"/>
    <property type="evidence" value="ECO:0000318"/>
    <property type="project" value="GO_Central"/>
</dbReference>
<dbReference type="FunFam" id="3.40.50.300:FF:001270">
    <property type="entry name" value="Thymidine kinase"/>
    <property type="match status" value="1"/>
</dbReference>
<dbReference type="Gene3D" id="3.30.60.20">
    <property type="match status" value="1"/>
</dbReference>
<dbReference type="Gene3D" id="3.40.50.300">
    <property type="entry name" value="P-loop containing nucleotide triphosphate hydrolases"/>
    <property type="match status" value="1"/>
</dbReference>
<dbReference type="HAMAP" id="MF_00124">
    <property type="entry name" value="Thymidine_kinase"/>
    <property type="match status" value="1"/>
</dbReference>
<dbReference type="InterPro" id="IPR027417">
    <property type="entry name" value="P-loop_NTPase"/>
</dbReference>
<dbReference type="InterPro" id="IPR001267">
    <property type="entry name" value="Thymidine_kinase"/>
</dbReference>
<dbReference type="InterPro" id="IPR020633">
    <property type="entry name" value="Thymidine_kinase_CS"/>
</dbReference>
<dbReference type="NCBIfam" id="NF003296">
    <property type="entry name" value="PRK04296.1-1"/>
    <property type="match status" value="1"/>
</dbReference>
<dbReference type="PANTHER" id="PTHR11441">
    <property type="entry name" value="THYMIDINE KINASE"/>
    <property type="match status" value="1"/>
</dbReference>
<dbReference type="PANTHER" id="PTHR11441:SF0">
    <property type="entry name" value="THYMIDINE KINASE, CYTOSOLIC"/>
    <property type="match status" value="1"/>
</dbReference>
<dbReference type="Pfam" id="PF00265">
    <property type="entry name" value="TK"/>
    <property type="match status" value="1"/>
</dbReference>
<dbReference type="PIRSF" id="PIRSF035805">
    <property type="entry name" value="TK_cell"/>
    <property type="match status" value="1"/>
</dbReference>
<dbReference type="SUPFAM" id="SSF57716">
    <property type="entry name" value="Glucocorticoid receptor-like (DNA-binding domain)"/>
    <property type="match status" value="1"/>
</dbReference>
<dbReference type="SUPFAM" id="SSF52540">
    <property type="entry name" value="P-loop containing nucleoside triphosphate hydrolases"/>
    <property type="match status" value="1"/>
</dbReference>
<dbReference type="PROSITE" id="PS00603">
    <property type="entry name" value="TK_CELLULAR_TYPE"/>
    <property type="match status" value="1"/>
</dbReference>
<reference key="1">
    <citation type="journal article" date="1995" name="Science">
        <title>The minimal gene complement of Mycoplasma genitalium.</title>
        <authorList>
            <person name="Fraser C.M."/>
            <person name="Gocayne J.D."/>
            <person name="White O."/>
            <person name="Adams M.D."/>
            <person name="Clayton R.A."/>
            <person name="Fleischmann R.D."/>
            <person name="Bult C.J."/>
            <person name="Kerlavage A.R."/>
            <person name="Sutton G.G."/>
            <person name="Kelley J.M."/>
            <person name="Fritchman J.L."/>
            <person name="Weidman J.F."/>
            <person name="Small K.V."/>
            <person name="Sandusky M."/>
            <person name="Fuhrmann J.L."/>
            <person name="Nguyen D.T."/>
            <person name="Utterback T.R."/>
            <person name="Saudek D.M."/>
            <person name="Phillips C.A."/>
            <person name="Merrick J.M."/>
            <person name="Tomb J.-F."/>
            <person name="Dougherty B.A."/>
            <person name="Bott K.F."/>
            <person name="Hu P.-C."/>
            <person name="Lucier T.S."/>
            <person name="Peterson S.N."/>
            <person name="Smith H.O."/>
            <person name="Hutchison C.A. III"/>
            <person name="Venter J.C."/>
        </authorList>
    </citation>
    <scope>NUCLEOTIDE SEQUENCE [LARGE SCALE GENOMIC DNA]</scope>
    <source>
        <strain>ATCC 33530 / DSM 19775 / NCTC 10195 / G37</strain>
    </source>
</reference>